<reference key="1">
    <citation type="submission" date="2006-05" db="EMBL/GenBank/DDBJ databases">
        <title>Complete sequence of chromosome 3 of Burkholderia cenocepacia AU 1054.</title>
        <authorList>
            <consortium name="US DOE Joint Genome Institute"/>
            <person name="Copeland A."/>
            <person name="Lucas S."/>
            <person name="Lapidus A."/>
            <person name="Barry K."/>
            <person name="Detter J.C."/>
            <person name="Glavina del Rio T."/>
            <person name="Hammon N."/>
            <person name="Israni S."/>
            <person name="Dalin E."/>
            <person name="Tice H."/>
            <person name="Pitluck S."/>
            <person name="Chain P."/>
            <person name="Malfatti S."/>
            <person name="Shin M."/>
            <person name="Vergez L."/>
            <person name="Schmutz J."/>
            <person name="Larimer F."/>
            <person name="Land M."/>
            <person name="Hauser L."/>
            <person name="Kyrpides N."/>
            <person name="Lykidis A."/>
            <person name="LiPuma J.J."/>
            <person name="Konstantinidis K."/>
            <person name="Tiedje J.M."/>
            <person name="Richardson P."/>
        </authorList>
    </citation>
    <scope>NUCLEOTIDE SEQUENCE [LARGE SCALE GENOMIC DNA]</scope>
    <source>
        <strain>AU 1054</strain>
    </source>
</reference>
<feature type="chain" id="PRO_5000123904" description="3-(3-hydroxy-phenyl)propionate/3-hydroxycinnamic acid hydroxylase">
    <location>
        <begin position="1"/>
        <end position="542"/>
    </location>
</feature>
<feature type="binding site" evidence="1">
    <location>
        <begin position="10"/>
        <end position="39"/>
    </location>
    <ligand>
        <name>FAD</name>
        <dbReference type="ChEBI" id="CHEBI:57692"/>
    </ligand>
</feature>
<feature type="binding site" evidence="1">
    <location>
        <begin position="278"/>
        <end position="288"/>
    </location>
    <ligand>
        <name>FAD</name>
        <dbReference type="ChEBI" id="CHEBI:57692"/>
    </ligand>
</feature>
<name>MHPA_BURO1</name>
<protein>
    <recommendedName>
        <fullName evidence="1">3-(3-hydroxy-phenyl)propionate/3-hydroxycinnamic acid hydroxylase</fullName>
        <shortName evidence="1">3-HCI hydroxylase</shortName>
        <shortName evidence="1">3-HPP hydroxylase</shortName>
        <ecNumber evidence="1">1.14.13.127</ecNumber>
    </recommendedName>
</protein>
<proteinExistence type="inferred from homology"/>
<sequence>MKANNRNRTSVAIVGAGPNGAAMANLLGLYGVDTIVVERAPQIVEFPRAVGIDDEALRLFQTAGLADELSRDIIQNVPLRMFKANGECFADIRPSIREFGWWRRNIFMQHLAERTLRDALARYPHVSLRTGEEVVGLEQDDECVTLQVRAADGQQYELDADYVVAADGGRSPVREMLGIRLAGTTHPMKWVVVDVKNARLDQPCTALNCDPRRPNVCIYLPFNYRRWEFLVFPHEDEEAIAQPESIRALIAPYVDDVDRIEIVRARTYTHHSRVAERFVAGRVALIGDAAHLSPPWIGQGLNAGLRDVGNLAWKLAGVVNGTLHRRVISTYESERRDHAKAMIDLADTFGAMLMPTSRLVAFLRDRFLGLARYAPGLKDYVLQMRFKPMPSYTHGVVVTGTSDAVGRMIVQPDVETADGARRKLDDVLGPWFAIIGWRCDPQACLSDDDRAFWTALGAKFVQIVRSRSGTCREQRIASAHDSVCVEDVDNAMAEWFDRHAAPLVVVRPDRYVAAQTDAAGMAGVTAAFQAFAARQRETADVC</sequence>
<dbReference type="EC" id="1.14.13.127" evidence="1"/>
<dbReference type="EMBL" id="CP000380">
    <property type="protein sequence ID" value="ABF81348.1"/>
    <property type="molecule type" value="Genomic_DNA"/>
</dbReference>
<dbReference type="SMR" id="Q1BGA7"/>
<dbReference type="HOGENOM" id="CLU_009665_20_2_4"/>
<dbReference type="UniPathway" id="UPA00714"/>
<dbReference type="GO" id="GO:0008688">
    <property type="term" value="F:3-(3-hydroxyphenyl)propionate hydroxylase activity"/>
    <property type="evidence" value="ECO:0007669"/>
    <property type="project" value="UniProtKB-UniRule"/>
</dbReference>
<dbReference type="GO" id="GO:0071949">
    <property type="term" value="F:FAD binding"/>
    <property type="evidence" value="ECO:0007669"/>
    <property type="project" value="InterPro"/>
</dbReference>
<dbReference type="GO" id="GO:0019622">
    <property type="term" value="P:3-(3-hydroxy)phenylpropionate catabolic process"/>
    <property type="evidence" value="ECO:0007669"/>
    <property type="project" value="UniProtKB-UniRule"/>
</dbReference>
<dbReference type="GO" id="GO:0019380">
    <property type="term" value="P:3-phenylpropionate catabolic process"/>
    <property type="evidence" value="ECO:0007669"/>
    <property type="project" value="UniProtKB-UniPathway"/>
</dbReference>
<dbReference type="Gene3D" id="3.30.70.2450">
    <property type="match status" value="1"/>
</dbReference>
<dbReference type="Gene3D" id="3.50.50.60">
    <property type="entry name" value="FAD/NAD(P)-binding domain"/>
    <property type="match status" value="1"/>
</dbReference>
<dbReference type="HAMAP" id="MF_01652">
    <property type="entry name" value="MhpA"/>
    <property type="match status" value="1"/>
</dbReference>
<dbReference type="InterPro" id="IPR023786">
    <property type="entry name" value="3-HPP/3HCI_hydroxylase"/>
</dbReference>
<dbReference type="InterPro" id="IPR002938">
    <property type="entry name" value="FAD-bd"/>
</dbReference>
<dbReference type="InterPro" id="IPR036188">
    <property type="entry name" value="FAD/NAD-bd_sf"/>
</dbReference>
<dbReference type="InterPro" id="IPR050631">
    <property type="entry name" value="PheA/TfdB_FAD_monoxygenase"/>
</dbReference>
<dbReference type="NCBIfam" id="NF004829">
    <property type="entry name" value="PRK06183.1-3"/>
    <property type="match status" value="1"/>
</dbReference>
<dbReference type="NCBIfam" id="NF004831">
    <property type="entry name" value="PRK06183.1-5"/>
    <property type="match status" value="1"/>
</dbReference>
<dbReference type="PANTHER" id="PTHR43476">
    <property type="entry name" value="3-(3-HYDROXY-PHENYL)PROPIONATE/3-HYDROXYCINNAMIC ACID HYDROXYLASE"/>
    <property type="match status" value="1"/>
</dbReference>
<dbReference type="PANTHER" id="PTHR43476:SF3">
    <property type="entry name" value="FAD-BINDING MONOOXYGENASE"/>
    <property type="match status" value="1"/>
</dbReference>
<dbReference type="Pfam" id="PF01494">
    <property type="entry name" value="FAD_binding_3"/>
    <property type="match status" value="1"/>
</dbReference>
<dbReference type="PRINTS" id="PR00420">
    <property type="entry name" value="RNGMNOXGNASE"/>
</dbReference>
<dbReference type="SUPFAM" id="SSF51905">
    <property type="entry name" value="FAD/NAD(P)-binding domain"/>
    <property type="match status" value="1"/>
</dbReference>
<evidence type="ECO:0000255" key="1">
    <source>
        <dbReference type="HAMAP-Rule" id="MF_01652"/>
    </source>
</evidence>
<gene>
    <name evidence="1" type="primary">mhpA</name>
    <name type="ordered locus">Bcen_6487</name>
</gene>
<comment type="function">
    <text evidence="1">Catalyzes the insertion of one atom of molecular oxygen into position 2 of the phenyl ring of 3-(3-hydroxyphenyl)propionate (3-HPP) and hydroxycinnamic acid (3HCI).</text>
</comment>
<comment type="catalytic activity">
    <reaction evidence="1">
        <text>3-(3-hydroxyphenyl)propanoate + NADH + O2 + H(+) = 3-(2,3-dihydroxyphenyl)propanoate + NAD(+) + H2O</text>
        <dbReference type="Rhea" id="RHEA:24785"/>
        <dbReference type="ChEBI" id="CHEBI:15377"/>
        <dbReference type="ChEBI" id="CHEBI:15378"/>
        <dbReference type="ChEBI" id="CHEBI:15379"/>
        <dbReference type="ChEBI" id="CHEBI:46951"/>
        <dbReference type="ChEBI" id="CHEBI:57277"/>
        <dbReference type="ChEBI" id="CHEBI:57540"/>
        <dbReference type="ChEBI" id="CHEBI:57945"/>
        <dbReference type="EC" id="1.14.13.127"/>
    </reaction>
</comment>
<comment type="catalytic activity">
    <reaction evidence="1">
        <text>(2E)-3-(3-hydroxyphenyl)prop-2-enoate + NADH + O2 + H(+) = (2E)-3-(2,3-dihydroxyphenyl)prop-2-enoate + NAD(+) + H2O</text>
        <dbReference type="Rhea" id="RHEA:27846"/>
        <dbReference type="ChEBI" id="CHEBI:15377"/>
        <dbReference type="ChEBI" id="CHEBI:15378"/>
        <dbReference type="ChEBI" id="CHEBI:15379"/>
        <dbReference type="ChEBI" id="CHEBI:47928"/>
        <dbReference type="ChEBI" id="CHEBI:57540"/>
        <dbReference type="ChEBI" id="CHEBI:57945"/>
        <dbReference type="ChEBI" id="CHEBI:58642"/>
        <dbReference type="EC" id="1.14.13.127"/>
    </reaction>
</comment>
<comment type="cofactor">
    <cofactor evidence="1">
        <name>FAD</name>
        <dbReference type="ChEBI" id="CHEBI:57692"/>
    </cofactor>
</comment>
<comment type="pathway">
    <text evidence="1">Aromatic compound metabolism; 3-phenylpropanoate degradation.</text>
</comment>
<comment type="similarity">
    <text evidence="1">Belongs to the PheA/TfdB FAD monooxygenase family.</text>
</comment>
<keyword id="KW-0058">Aromatic hydrocarbons catabolism</keyword>
<keyword id="KW-0274">FAD</keyword>
<keyword id="KW-0285">Flavoprotein</keyword>
<keyword id="KW-0520">NAD</keyword>
<keyword id="KW-0560">Oxidoreductase</keyword>
<accession>Q1BGA7</accession>
<organism>
    <name type="scientific">Burkholderia orbicola (strain AU 1054)</name>
    <dbReference type="NCBI Taxonomy" id="331271"/>
    <lineage>
        <taxon>Bacteria</taxon>
        <taxon>Pseudomonadati</taxon>
        <taxon>Pseudomonadota</taxon>
        <taxon>Betaproteobacteria</taxon>
        <taxon>Burkholderiales</taxon>
        <taxon>Burkholderiaceae</taxon>
        <taxon>Burkholderia</taxon>
        <taxon>Burkholderia cepacia complex</taxon>
        <taxon>Burkholderia orbicola</taxon>
    </lineage>
</organism>